<protein>
    <recommendedName>
        <fullName evidence="1">Glycine--tRNA ligase beta subunit</fullName>
        <ecNumber evidence="1">6.1.1.14</ecNumber>
    </recommendedName>
    <alternativeName>
        <fullName evidence="1">Glycyl-tRNA synthetase beta subunit</fullName>
        <shortName evidence="1">GlyRS</shortName>
    </alternativeName>
</protein>
<accession>B1X8H5</accession>
<proteinExistence type="inferred from homology"/>
<feature type="chain" id="PRO_1000101278" description="Glycine--tRNA ligase beta subunit">
    <location>
        <begin position="1"/>
        <end position="689"/>
    </location>
</feature>
<evidence type="ECO:0000255" key="1">
    <source>
        <dbReference type="HAMAP-Rule" id="MF_00255"/>
    </source>
</evidence>
<name>SYGB_ECODH</name>
<comment type="catalytic activity">
    <reaction evidence="1">
        <text>tRNA(Gly) + glycine + ATP = glycyl-tRNA(Gly) + AMP + diphosphate</text>
        <dbReference type="Rhea" id="RHEA:16013"/>
        <dbReference type="Rhea" id="RHEA-COMP:9664"/>
        <dbReference type="Rhea" id="RHEA-COMP:9683"/>
        <dbReference type="ChEBI" id="CHEBI:30616"/>
        <dbReference type="ChEBI" id="CHEBI:33019"/>
        <dbReference type="ChEBI" id="CHEBI:57305"/>
        <dbReference type="ChEBI" id="CHEBI:78442"/>
        <dbReference type="ChEBI" id="CHEBI:78522"/>
        <dbReference type="ChEBI" id="CHEBI:456215"/>
        <dbReference type="EC" id="6.1.1.14"/>
    </reaction>
</comment>
<comment type="subunit">
    <text evidence="1">Tetramer of two alpha and two beta subunits.</text>
</comment>
<comment type="subcellular location">
    <subcellularLocation>
        <location evidence="1">Cytoplasm</location>
    </subcellularLocation>
</comment>
<comment type="similarity">
    <text evidence="1">Belongs to the class-II aminoacyl-tRNA synthetase family.</text>
</comment>
<organism>
    <name type="scientific">Escherichia coli (strain K12 / DH10B)</name>
    <dbReference type="NCBI Taxonomy" id="316385"/>
    <lineage>
        <taxon>Bacteria</taxon>
        <taxon>Pseudomonadati</taxon>
        <taxon>Pseudomonadota</taxon>
        <taxon>Gammaproteobacteria</taxon>
        <taxon>Enterobacterales</taxon>
        <taxon>Enterobacteriaceae</taxon>
        <taxon>Escherichia</taxon>
    </lineage>
</organism>
<gene>
    <name evidence="1" type="primary">glyS</name>
    <name type="ordered locus">ECDH10B_3739</name>
</gene>
<sequence>MSEKTFLVEIGTEELPPKALRSLAESFAANFTAELDNAGLAHGTVQWFAAPRRLALKVANLAEAQPDREIEKRGPAIAQAFDAEGKPSKAAEGWARGCGITVDQAERLTTDKGEWLLYRAHVKGESTEALLPNMVATSLAKLPIPKLMRWGASDVHFVRPVHTVTLLLGDKVIPATILGIQSDRVIRGHRFMGEPEFTIDNADQYPEILRERGKVIADYEERKAKIKADAEEAARKIGGNADLSESLLEEVASLVEWPVVLTAKFEEKFLAVPAEALVYTMKGDQKYFPVYANDGKLLPNFIFVANIESKDPQQIISGNEKVVRPRLADAEFFFNTDRKKRLEDNLPRLQTVLFQQQLGTLRDKTDRIQALAGWIAEQIGADVNHATRAGLLSKCDLMTNMVFEFTDTQGVMGMHYARHDGEAEDVAVALNEQYQPRFAGDDLPSNPVACALAIADKMDTLAGIFGIGQHPKGDKDPFALRRAALGVLRIIVEKNLNLDLQTLTEEAVRLYGDKLTNANVVDDVIDFMLGRFRAWYQDEGYTVDTIQAVLARRPTRPADFDARMKAVSHFRTLDAAAALAAANKRVSNILAKSDEVLSDRVNASTLKEPEEIKLAMQVVVLRDKLEPYFTEGRYQDALVELAELREPVDAFFDKVMVMVDDKELRINRLTMLEKLRELFLRVADISLLQ</sequence>
<reference key="1">
    <citation type="journal article" date="2008" name="J. Bacteriol.">
        <title>The complete genome sequence of Escherichia coli DH10B: insights into the biology of a laboratory workhorse.</title>
        <authorList>
            <person name="Durfee T."/>
            <person name="Nelson R."/>
            <person name="Baldwin S."/>
            <person name="Plunkett G. III"/>
            <person name="Burland V."/>
            <person name="Mau B."/>
            <person name="Petrosino J.F."/>
            <person name="Qin X."/>
            <person name="Muzny D.M."/>
            <person name="Ayele M."/>
            <person name="Gibbs R.A."/>
            <person name="Csorgo B."/>
            <person name="Posfai G."/>
            <person name="Weinstock G.M."/>
            <person name="Blattner F.R."/>
        </authorList>
    </citation>
    <scope>NUCLEOTIDE SEQUENCE [LARGE SCALE GENOMIC DNA]</scope>
    <source>
        <strain>K12 / DH10B</strain>
    </source>
</reference>
<keyword id="KW-0030">Aminoacyl-tRNA synthetase</keyword>
<keyword id="KW-0067">ATP-binding</keyword>
<keyword id="KW-0963">Cytoplasm</keyword>
<keyword id="KW-0436">Ligase</keyword>
<keyword id="KW-0547">Nucleotide-binding</keyword>
<keyword id="KW-0648">Protein biosynthesis</keyword>
<dbReference type="EC" id="6.1.1.14" evidence="1"/>
<dbReference type="EMBL" id="CP000948">
    <property type="protein sequence ID" value="ACB04610.1"/>
    <property type="molecule type" value="Genomic_DNA"/>
</dbReference>
<dbReference type="RefSeq" id="WP_001291772.1">
    <property type="nucleotide sequence ID" value="NC_010473.1"/>
</dbReference>
<dbReference type="SMR" id="B1X8H5"/>
<dbReference type="DNASU" id="6058311"/>
<dbReference type="KEGG" id="ecd:ECDH10B_3739"/>
<dbReference type="HOGENOM" id="CLU_007220_2_2_6"/>
<dbReference type="GO" id="GO:0005829">
    <property type="term" value="C:cytosol"/>
    <property type="evidence" value="ECO:0007669"/>
    <property type="project" value="TreeGrafter"/>
</dbReference>
<dbReference type="GO" id="GO:0004814">
    <property type="term" value="F:arginine-tRNA ligase activity"/>
    <property type="evidence" value="ECO:0007669"/>
    <property type="project" value="InterPro"/>
</dbReference>
<dbReference type="GO" id="GO:0005524">
    <property type="term" value="F:ATP binding"/>
    <property type="evidence" value="ECO:0007669"/>
    <property type="project" value="UniProtKB-UniRule"/>
</dbReference>
<dbReference type="GO" id="GO:0004820">
    <property type="term" value="F:glycine-tRNA ligase activity"/>
    <property type="evidence" value="ECO:0007669"/>
    <property type="project" value="UniProtKB-UniRule"/>
</dbReference>
<dbReference type="GO" id="GO:0006420">
    <property type="term" value="P:arginyl-tRNA aminoacylation"/>
    <property type="evidence" value="ECO:0007669"/>
    <property type="project" value="InterPro"/>
</dbReference>
<dbReference type="GO" id="GO:0006426">
    <property type="term" value="P:glycyl-tRNA aminoacylation"/>
    <property type="evidence" value="ECO:0007669"/>
    <property type="project" value="UniProtKB-UniRule"/>
</dbReference>
<dbReference type="HAMAP" id="MF_00255">
    <property type="entry name" value="Gly_tRNA_synth_beta"/>
    <property type="match status" value="1"/>
</dbReference>
<dbReference type="InterPro" id="IPR008909">
    <property type="entry name" value="DALR_anticod-bd"/>
</dbReference>
<dbReference type="InterPro" id="IPR015944">
    <property type="entry name" value="Gly-tRNA-synth_bsu"/>
</dbReference>
<dbReference type="InterPro" id="IPR006194">
    <property type="entry name" value="Gly-tRNA-synth_heterodimer"/>
</dbReference>
<dbReference type="NCBIfam" id="TIGR00211">
    <property type="entry name" value="glyS"/>
    <property type="match status" value="1"/>
</dbReference>
<dbReference type="PANTHER" id="PTHR30075:SF2">
    <property type="entry name" value="GLYCINE--TRNA LIGASE, CHLOROPLASTIC_MITOCHONDRIAL 2"/>
    <property type="match status" value="1"/>
</dbReference>
<dbReference type="PANTHER" id="PTHR30075">
    <property type="entry name" value="GLYCYL-TRNA SYNTHETASE"/>
    <property type="match status" value="1"/>
</dbReference>
<dbReference type="Pfam" id="PF05746">
    <property type="entry name" value="DALR_1"/>
    <property type="match status" value="1"/>
</dbReference>
<dbReference type="Pfam" id="PF02092">
    <property type="entry name" value="tRNA_synt_2f"/>
    <property type="match status" value="1"/>
</dbReference>
<dbReference type="PRINTS" id="PR01045">
    <property type="entry name" value="TRNASYNTHGB"/>
</dbReference>
<dbReference type="SUPFAM" id="SSF109604">
    <property type="entry name" value="HD-domain/PDEase-like"/>
    <property type="match status" value="1"/>
</dbReference>
<dbReference type="PROSITE" id="PS50861">
    <property type="entry name" value="AA_TRNA_LIGASE_II_GLYAB"/>
    <property type="match status" value="1"/>
</dbReference>